<name>APOA2_MACMU</name>
<evidence type="ECO:0000250" key="1">
    <source>
        <dbReference type="UniProtKB" id="P02652"/>
    </source>
</evidence>
<evidence type="ECO:0000250" key="2">
    <source>
        <dbReference type="UniProtKB" id="P83704"/>
    </source>
</evidence>
<evidence type="ECO:0000269" key="3">
    <source>
    </source>
</evidence>
<evidence type="ECO:0000305" key="4"/>
<comment type="function">
    <text>Apo A-II makes up about 20% of the protein of the HDL (high density lipoprotein) phospholipid-rich fraction in plasma.</text>
</comment>
<comment type="subunit">
    <text evidence="1">Monomer. Interacts with NAXE and NDRG1 (By similarity).</text>
</comment>
<comment type="subcellular location">
    <subcellularLocation>
        <location evidence="1">Secreted</location>
    </subcellularLocation>
</comment>
<comment type="tissue specificity">
    <text>Plasma.</text>
</comment>
<comment type="similarity">
    <text evidence="4">Belongs to the apolipoprotein A2 family.</text>
</comment>
<organism>
    <name type="scientific">Macaca mulatta</name>
    <name type="common">Rhesus macaque</name>
    <dbReference type="NCBI Taxonomy" id="9544"/>
    <lineage>
        <taxon>Eukaryota</taxon>
        <taxon>Metazoa</taxon>
        <taxon>Chordata</taxon>
        <taxon>Craniata</taxon>
        <taxon>Vertebrata</taxon>
        <taxon>Euteleostomi</taxon>
        <taxon>Mammalia</taxon>
        <taxon>Eutheria</taxon>
        <taxon>Euarchontoglires</taxon>
        <taxon>Primates</taxon>
        <taxon>Haplorrhini</taxon>
        <taxon>Catarrhini</taxon>
        <taxon>Cercopithecidae</taxon>
        <taxon>Cercopithecinae</taxon>
        <taxon>Macaca</taxon>
    </lineage>
</organism>
<sequence length="77" mass="8747">QAEEPSVESLVSQYFQTVTDYGKDLMEKVKSPELQAQAKAYFEKSKEQLTPLVKKAGTDLVNFLSYFVELRTQPATQ</sequence>
<gene>
    <name type="primary">APOA2</name>
</gene>
<protein>
    <recommendedName>
        <fullName>Apolipoprotein A-II</fullName>
        <shortName>Apo-AII</shortName>
        <shortName>ApoA-II</shortName>
    </recommendedName>
    <alternativeName>
        <fullName>Apolipoprotein A2</fullName>
    </alternativeName>
    <component>
        <recommendedName>
            <fullName>Truncated apolipoprotein A-II</fullName>
        </recommendedName>
    </component>
</protein>
<accession>P02653</accession>
<dbReference type="PIR" id="A03097">
    <property type="entry name" value="LPMQA2"/>
</dbReference>
<dbReference type="SMR" id="P02653"/>
<dbReference type="STRING" id="9544.ENSMMUP00000006019"/>
<dbReference type="PaxDb" id="9544-ENSMMUP00000006019"/>
<dbReference type="eggNOG" id="ENOG502SVYZ">
    <property type="taxonomic scope" value="Eukaryota"/>
</dbReference>
<dbReference type="HOGENOM" id="CLU_157351_0_0_1"/>
<dbReference type="InParanoid" id="P02653"/>
<dbReference type="Proteomes" id="UP000006718">
    <property type="component" value="Unassembled WGS sequence"/>
</dbReference>
<dbReference type="GO" id="GO:0034366">
    <property type="term" value="C:spherical high-density lipoprotein particle"/>
    <property type="evidence" value="ECO:0000318"/>
    <property type="project" value="GO_Central"/>
</dbReference>
<dbReference type="GO" id="GO:0008035">
    <property type="term" value="F:high-density lipoprotein particle binding"/>
    <property type="evidence" value="ECO:0000318"/>
    <property type="project" value="GO_Central"/>
</dbReference>
<dbReference type="GO" id="GO:0008289">
    <property type="term" value="F:lipid binding"/>
    <property type="evidence" value="ECO:0007669"/>
    <property type="project" value="InterPro"/>
</dbReference>
<dbReference type="GO" id="GO:0046982">
    <property type="term" value="F:protein heterodimerization activity"/>
    <property type="evidence" value="ECO:0000250"/>
    <property type="project" value="UniProtKB"/>
</dbReference>
<dbReference type="GO" id="GO:0042632">
    <property type="term" value="P:cholesterol homeostasis"/>
    <property type="evidence" value="ECO:0000318"/>
    <property type="project" value="GO_Central"/>
</dbReference>
<dbReference type="GO" id="GO:0030301">
    <property type="term" value="P:cholesterol transport"/>
    <property type="evidence" value="ECO:0000318"/>
    <property type="project" value="GO_Central"/>
</dbReference>
<dbReference type="GO" id="GO:0042157">
    <property type="term" value="P:lipoprotein metabolic process"/>
    <property type="evidence" value="ECO:0007669"/>
    <property type="project" value="InterPro"/>
</dbReference>
<dbReference type="GO" id="GO:0018206">
    <property type="term" value="P:peptidyl-methionine modification"/>
    <property type="evidence" value="ECO:0000250"/>
    <property type="project" value="UniProtKB"/>
</dbReference>
<dbReference type="GO" id="GO:0032757">
    <property type="term" value="P:positive regulation of interleukin-8 production"/>
    <property type="evidence" value="ECO:0000250"/>
    <property type="project" value="UniProtKB"/>
</dbReference>
<dbReference type="GO" id="GO:0050766">
    <property type="term" value="P:positive regulation of phagocytosis"/>
    <property type="evidence" value="ECO:0000250"/>
    <property type="project" value="UniProtKB"/>
</dbReference>
<dbReference type="GO" id="GO:0018158">
    <property type="term" value="P:protein oxidation"/>
    <property type="evidence" value="ECO:0000250"/>
    <property type="project" value="UniProtKB"/>
</dbReference>
<dbReference type="GO" id="GO:0050821">
    <property type="term" value="P:protein stabilization"/>
    <property type="evidence" value="ECO:0000250"/>
    <property type="project" value="UniProtKB"/>
</dbReference>
<dbReference type="Gene3D" id="6.10.250.100">
    <property type="match status" value="1"/>
</dbReference>
<dbReference type="InterPro" id="IPR006801">
    <property type="entry name" value="ApoA-II"/>
</dbReference>
<dbReference type="InterPro" id="IPR036172">
    <property type="entry name" value="ApoA-II_sf"/>
</dbReference>
<dbReference type="PANTHER" id="PTHR11027">
    <property type="entry name" value="APOLIPOPROTEIN A-II"/>
    <property type="match status" value="1"/>
</dbReference>
<dbReference type="PANTHER" id="PTHR11027:SF0">
    <property type="entry name" value="APOLIPOPROTEIN A-II"/>
    <property type="match status" value="1"/>
</dbReference>
<dbReference type="Pfam" id="PF04711">
    <property type="entry name" value="ApoA-II"/>
    <property type="match status" value="1"/>
</dbReference>
<dbReference type="SUPFAM" id="SSF82936">
    <property type="entry name" value="Apolipoprotein A-II"/>
    <property type="match status" value="1"/>
</dbReference>
<proteinExistence type="evidence at protein level"/>
<feature type="chain" id="PRO_0000181375" description="Apolipoprotein A-II">
    <location>
        <begin position="1"/>
        <end position="77"/>
    </location>
</feature>
<feature type="chain" id="PRO_0000416581" description="Truncated apolipoprotein A-II" evidence="2">
    <location>
        <begin position="1"/>
        <end position="76"/>
    </location>
</feature>
<feature type="modified residue" description="Pyrrolidone carboxylic acid" evidence="3">
    <location>
        <position position="1"/>
    </location>
</feature>
<feature type="modified residue" description="Methionine sulfoxide" evidence="1">
    <location>
        <position position="26"/>
    </location>
</feature>
<feature type="modified residue" description="Phosphoserine" evidence="1">
    <location>
        <position position="31"/>
    </location>
</feature>
<feature type="modified residue" description="Phosphoserine" evidence="1">
    <location>
        <position position="45"/>
    </location>
</feature>
<reference key="1">
    <citation type="journal article" date="1976" name="Biochemistry">
        <title>Covalent structure of apolipoprotein A-II from Macaca mulatta serum high-density lipoproteins.</title>
        <authorList>
            <person name="Edelstein C."/>
            <person name="Noyes C."/>
            <person name="Keim P."/>
            <person name="Heinrikson R.L."/>
            <person name="Fellows R.E."/>
            <person name="Scanu A.M."/>
        </authorList>
    </citation>
    <scope>PROTEIN SEQUENCE</scope>
    <scope>PYROGLUTAMATE FORMATION AT GLN-1</scope>
</reference>
<keyword id="KW-0903">Direct protein sequencing</keyword>
<keyword id="KW-0345">HDL</keyword>
<keyword id="KW-0445">Lipid transport</keyword>
<keyword id="KW-0558">Oxidation</keyword>
<keyword id="KW-0597">Phosphoprotein</keyword>
<keyword id="KW-0873">Pyrrolidone carboxylic acid</keyword>
<keyword id="KW-1185">Reference proteome</keyword>
<keyword id="KW-0964">Secreted</keyword>
<keyword id="KW-0813">Transport</keyword>